<name>FAR10_TYRGL</name>
<reference evidence="5" key="1">
    <citation type="journal article" date="2012" name="Syst. Biol.">
        <title>Peptidomics-based phylogeny and biogeography of Mantophasmatodea (Hexapoda).</title>
        <authorList>
            <person name="Predel R."/>
            <person name="Neupert S."/>
            <person name="Huetteroth W."/>
            <person name="Kahnt J."/>
            <person name="Waidelich D."/>
            <person name="Roth S."/>
        </authorList>
    </citation>
    <scope>PROTEIN SEQUENCE</scope>
    <source>
        <tissue evidence="3">Thoracic perisympathetic organs</tissue>
    </source>
</reference>
<evidence type="ECO:0000250" key="1">
    <source>
        <dbReference type="UniProtKB" id="P34405"/>
    </source>
</evidence>
<evidence type="ECO:0000255" key="2"/>
<evidence type="ECO:0000269" key="3">
    <source>
    </source>
</evidence>
<evidence type="ECO:0000303" key="4">
    <source>
    </source>
</evidence>
<evidence type="ECO:0000305" key="5"/>
<evidence type="ECO:0000305" key="6">
    <source>
    </source>
</evidence>
<keyword id="KW-0903">Direct protein sequencing</keyword>
<keyword id="KW-0527">Neuropeptide</keyword>
<keyword id="KW-0964">Secreted</keyword>
<protein>
    <recommendedName>
        <fullName evidence="4">Extended FMRFamide-10</fullName>
        <shortName evidence="4">FMRFa-10</shortName>
    </recommendedName>
</protein>
<comment type="function">
    <text evidence="1">FMRFamides and FMRFamide-like peptides are neuropeptides.</text>
</comment>
<comment type="subcellular location">
    <subcellularLocation>
        <location evidence="6">Secreted</location>
    </subcellularLocation>
</comment>
<comment type="similarity">
    <text evidence="2">Belongs to the FARP (FMRF amide related peptide) family.</text>
</comment>
<sequence length="11" mass="1161">PASDSGFLRDP</sequence>
<feature type="peptide" id="PRO_0000421553" description="Extended FMRFamide-10" evidence="3">
    <location>
        <begin position="1"/>
        <end position="11"/>
    </location>
</feature>
<feature type="unsure residue" description="L or I" evidence="3">
    <location>
        <position position="8"/>
    </location>
</feature>
<dbReference type="GO" id="GO:0005576">
    <property type="term" value="C:extracellular region"/>
    <property type="evidence" value="ECO:0007669"/>
    <property type="project" value="UniProtKB-SubCell"/>
</dbReference>
<dbReference type="GO" id="GO:0007218">
    <property type="term" value="P:neuropeptide signaling pathway"/>
    <property type="evidence" value="ECO:0007669"/>
    <property type="project" value="UniProtKB-KW"/>
</dbReference>
<proteinExistence type="evidence at protein level"/>
<accession>B3A0I4</accession>
<organism>
    <name type="scientific">Tyrannophasma gladiator</name>
    <name type="common">Gladiator</name>
    <name type="synonym">Heel-walker</name>
    <dbReference type="NCBI Taxonomy" id="270861"/>
    <lineage>
        <taxon>Eukaryota</taxon>
        <taxon>Metazoa</taxon>
        <taxon>Ecdysozoa</taxon>
        <taxon>Arthropoda</taxon>
        <taxon>Hexapoda</taxon>
        <taxon>Insecta</taxon>
        <taxon>Pterygota</taxon>
        <taxon>Neoptera</taxon>
        <taxon>Polyneoptera</taxon>
        <taxon>Mantophasmatodea</taxon>
        <taxon>Mantophasmatodea incertae sedis</taxon>
        <taxon>Tyrannophasma</taxon>
    </lineage>
</organism>